<feature type="chain" id="PRO_0000110031" description="UDP-4-amino-4-deoxy-L-arabinose--oxoglutarate aminotransferase">
    <location>
        <begin position="1"/>
        <end position="384"/>
    </location>
</feature>
<feature type="modified residue" description="N6-(pyridoxal phosphate)lysine" evidence="1">
    <location>
        <position position="182"/>
    </location>
</feature>
<reference key="1">
    <citation type="journal article" date="2004" name="Microbiology">
        <title>The pmrF polymyxin-resistance operon of Yersinia pseudotuberculosis is upregulated by the PhoP-PhoQ two-component system but not by PmrA-PmrB, and is not required for virulence.</title>
        <authorList>
            <person name="Marceau M.B."/>
            <person name="Sebbane F."/>
            <person name="Ewann F."/>
            <person name="Collyn F."/>
            <person name="Lindner B."/>
            <person name="Campos M.A."/>
            <person name="Bengoechea J.-A."/>
            <person name="Simonet M."/>
        </authorList>
    </citation>
    <scope>NUCLEOTIDE SEQUENCE [GENOMIC DNA]</scope>
    <scope>INDUCTION</scope>
    <source>
        <strain>32777 / IP2777 / Serotype O1:b</strain>
    </source>
</reference>
<reference key="2">
    <citation type="journal article" date="2004" name="Proc. Natl. Acad. Sci. U.S.A.">
        <title>Insights into the evolution of Yersinia pestis through whole-genome comparison with Yersinia pseudotuberculosis.</title>
        <authorList>
            <person name="Chain P.S.G."/>
            <person name="Carniel E."/>
            <person name="Larimer F.W."/>
            <person name="Lamerdin J."/>
            <person name="Stoutland P.O."/>
            <person name="Regala W.M."/>
            <person name="Georgescu A.M."/>
            <person name="Vergez L.M."/>
            <person name="Land M.L."/>
            <person name="Motin V.L."/>
            <person name="Brubaker R.R."/>
            <person name="Fowler J."/>
            <person name="Hinnebusch J."/>
            <person name="Marceau M."/>
            <person name="Medigue C."/>
            <person name="Simonet M."/>
            <person name="Chenal-Francisque V."/>
            <person name="Souza B."/>
            <person name="Dacheux D."/>
            <person name="Elliott J.M."/>
            <person name="Derbise A."/>
            <person name="Hauser L.J."/>
            <person name="Garcia E."/>
        </authorList>
    </citation>
    <scope>NUCLEOTIDE SEQUENCE [LARGE SCALE GENOMIC DNA]</scope>
    <source>
        <strain>IP32953</strain>
    </source>
</reference>
<keyword id="KW-0032">Aminotransferase</keyword>
<keyword id="KW-0046">Antibiotic resistance</keyword>
<keyword id="KW-0441">Lipid A biosynthesis</keyword>
<keyword id="KW-0444">Lipid biosynthesis</keyword>
<keyword id="KW-0443">Lipid metabolism</keyword>
<keyword id="KW-0448">Lipopolysaccharide biosynthesis</keyword>
<keyword id="KW-0663">Pyridoxal phosphate</keyword>
<keyword id="KW-0808">Transferase</keyword>
<comment type="function">
    <text evidence="1">Catalyzes the conversion of UDP-4-keto-arabinose (UDP-Ara4O) to UDP-4-amino-4-deoxy-L-arabinose (UDP-L-Ara4N). The modified arabinose is attached to lipid A and is required for resistance to polymyxin and cationic antimicrobial peptides.</text>
</comment>
<comment type="catalytic activity">
    <reaction evidence="1">
        <text>UDP-4-amino-4-deoxy-beta-L-arabinose + 2-oxoglutarate = UDP-beta-L-threo-pentopyranos-4-ulose + L-glutamate</text>
        <dbReference type="Rhea" id="RHEA:24710"/>
        <dbReference type="ChEBI" id="CHEBI:16810"/>
        <dbReference type="ChEBI" id="CHEBI:29985"/>
        <dbReference type="ChEBI" id="CHEBI:58708"/>
        <dbReference type="ChEBI" id="CHEBI:58710"/>
        <dbReference type="EC" id="2.6.1.87"/>
    </reaction>
</comment>
<comment type="cofactor">
    <cofactor evidence="1">
        <name>pyridoxal 5'-phosphate</name>
        <dbReference type="ChEBI" id="CHEBI:597326"/>
    </cofactor>
</comment>
<comment type="pathway">
    <text evidence="1">Nucleotide-sugar biosynthesis; UDP-4-deoxy-4-formamido-beta-L-arabinose biosynthesis; UDP-4-deoxy-4-formamido-beta-L-arabinose from UDP-alpha-D-glucuronate: step 2/3.</text>
</comment>
<comment type="pathway">
    <text evidence="1">Bacterial outer membrane biogenesis; lipopolysaccharide biosynthesis.</text>
</comment>
<comment type="subunit">
    <text evidence="1">Homodimer.</text>
</comment>
<comment type="induction">
    <text evidence="2">Activated by low magnesium concentrations, via the two-component regulatory system PhoP/PhoQ.</text>
</comment>
<comment type="similarity">
    <text evidence="1">Belongs to the DegT/DnrJ/EryC1 family. ArnB subfamily.</text>
</comment>
<evidence type="ECO:0000255" key="1">
    <source>
        <dbReference type="HAMAP-Rule" id="MF_01167"/>
    </source>
</evidence>
<evidence type="ECO:0000269" key="2">
    <source>
    </source>
</evidence>
<dbReference type="EC" id="2.6.1.87" evidence="1"/>
<dbReference type="EMBL" id="AF336802">
    <property type="protein sequence ID" value="AAK69640.1"/>
    <property type="molecule type" value="Genomic_DNA"/>
</dbReference>
<dbReference type="EMBL" id="BX936398">
    <property type="protein sequence ID" value="CAH21568.1"/>
    <property type="molecule type" value="Genomic_DNA"/>
</dbReference>
<dbReference type="RefSeq" id="WP_002211825.1">
    <property type="nucleotide sequence ID" value="NZ_CP009712.1"/>
</dbReference>
<dbReference type="SMR" id="Q7BF87"/>
<dbReference type="GeneID" id="57976255"/>
<dbReference type="KEGG" id="ypo:BZ17_124"/>
<dbReference type="KEGG" id="yps:YPTB2330"/>
<dbReference type="PATRIC" id="fig|273123.14.peg.133"/>
<dbReference type="UniPathway" id="UPA00030"/>
<dbReference type="UniPathway" id="UPA00032">
    <property type="reaction ID" value="UER00493"/>
</dbReference>
<dbReference type="Proteomes" id="UP000001011">
    <property type="component" value="Chromosome"/>
</dbReference>
<dbReference type="GO" id="GO:0016020">
    <property type="term" value="C:membrane"/>
    <property type="evidence" value="ECO:0007669"/>
    <property type="project" value="GOC"/>
</dbReference>
<dbReference type="GO" id="GO:0030170">
    <property type="term" value="F:pyridoxal phosphate binding"/>
    <property type="evidence" value="ECO:0007669"/>
    <property type="project" value="TreeGrafter"/>
</dbReference>
<dbReference type="GO" id="GO:0099620">
    <property type="term" value="F:UDP-4-amino-4-deoxy-L-arabinose aminotransferase"/>
    <property type="evidence" value="ECO:0007669"/>
    <property type="project" value="UniProtKB-EC"/>
</dbReference>
<dbReference type="GO" id="GO:0009245">
    <property type="term" value="P:lipid A biosynthetic process"/>
    <property type="evidence" value="ECO:0007669"/>
    <property type="project" value="UniProtKB-KW"/>
</dbReference>
<dbReference type="GO" id="GO:0009103">
    <property type="term" value="P:lipopolysaccharide biosynthetic process"/>
    <property type="evidence" value="ECO:0007669"/>
    <property type="project" value="UniProtKB-UniRule"/>
</dbReference>
<dbReference type="GO" id="GO:0046677">
    <property type="term" value="P:response to antibiotic"/>
    <property type="evidence" value="ECO:0007669"/>
    <property type="project" value="UniProtKB-KW"/>
</dbReference>
<dbReference type="CDD" id="cd00616">
    <property type="entry name" value="AHBA_syn"/>
    <property type="match status" value="1"/>
</dbReference>
<dbReference type="FunFam" id="3.40.640.10:FF:000040">
    <property type="entry name" value="UDP-4-amino-4-deoxy-L-arabinose--oxoglutarate aminotransferase"/>
    <property type="match status" value="1"/>
</dbReference>
<dbReference type="FunFam" id="3.90.1150.10:FF:000030">
    <property type="entry name" value="UDP-4-amino-4-deoxy-L-arabinose--oxoglutarate aminotransferase"/>
    <property type="match status" value="1"/>
</dbReference>
<dbReference type="Gene3D" id="3.90.1150.10">
    <property type="entry name" value="Aspartate Aminotransferase, domain 1"/>
    <property type="match status" value="1"/>
</dbReference>
<dbReference type="Gene3D" id="3.40.640.10">
    <property type="entry name" value="Type I PLP-dependent aspartate aminotransferase-like (Major domain)"/>
    <property type="match status" value="1"/>
</dbReference>
<dbReference type="HAMAP" id="MF_01167">
    <property type="entry name" value="ArnB_transfer"/>
    <property type="match status" value="1"/>
</dbReference>
<dbReference type="InterPro" id="IPR022850">
    <property type="entry name" value="ArnB_NH2Trfase"/>
</dbReference>
<dbReference type="InterPro" id="IPR000653">
    <property type="entry name" value="DegT/StrS_aminotransferase"/>
</dbReference>
<dbReference type="InterPro" id="IPR015424">
    <property type="entry name" value="PyrdxlP-dep_Trfase"/>
</dbReference>
<dbReference type="InterPro" id="IPR015421">
    <property type="entry name" value="PyrdxlP-dep_Trfase_major"/>
</dbReference>
<dbReference type="InterPro" id="IPR015422">
    <property type="entry name" value="PyrdxlP-dep_Trfase_small"/>
</dbReference>
<dbReference type="NCBIfam" id="NF008658">
    <property type="entry name" value="PRK11658.1"/>
    <property type="match status" value="1"/>
</dbReference>
<dbReference type="PANTHER" id="PTHR30244">
    <property type="entry name" value="TRANSAMINASE"/>
    <property type="match status" value="1"/>
</dbReference>
<dbReference type="PANTHER" id="PTHR30244:SF41">
    <property type="entry name" value="UDP-4-AMINO-4-DEOXY-L-ARABINOSE--OXOGLUTARATE AMINOTRANSFERASE"/>
    <property type="match status" value="1"/>
</dbReference>
<dbReference type="Pfam" id="PF01041">
    <property type="entry name" value="DegT_DnrJ_EryC1"/>
    <property type="match status" value="1"/>
</dbReference>
<dbReference type="PIRSF" id="PIRSF000390">
    <property type="entry name" value="PLP_StrS"/>
    <property type="match status" value="1"/>
</dbReference>
<dbReference type="SUPFAM" id="SSF53383">
    <property type="entry name" value="PLP-dependent transferases"/>
    <property type="match status" value="1"/>
</dbReference>
<sequence>MQSFLPFSRPAIGSEEINAVANVLGSGWITTGPQNHQLETDFCQIFGCKHAIAVCSATAGMHITLLALGIGPGDEVITPSQTWVSTINMIVLLGAEPVMVDVDRDTLMVNAAAIEAAITPNTKAIIPVHYAGAPCDLDALRQISQRHGIPLIEDAAHAVGTRYRDQWIGEQGTAIFSFHAIKNITCAEGGLVATDDDELAARVRRLKFHGLGVDAFDRQIQGRSPQAEVVEPGYKYNLSDIHAAIAVVQLRRLPEINARRQALVASYHKALAHLPLQPLALPHYSHQHAWHLFMVRVDEERCGISRDQLMACLKDMGIGSGLHFRAVHSQKYYRERYPHLCLPNTEWNSARLCTLPLFPDMLDSDIERVANALTTIIGSHRVTK</sequence>
<protein>
    <recommendedName>
        <fullName evidence="1">UDP-4-amino-4-deoxy-L-arabinose--oxoglutarate aminotransferase</fullName>
        <ecNumber evidence="1">2.6.1.87</ecNumber>
    </recommendedName>
    <alternativeName>
        <fullName evidence="1">UDP-(beta-L-threo-pentapyranosyl-4''-ulose diphosphate) aminotransferase</fullName>
        <shortName evidence="1">UDP-Ara4O aminotransferase</shortName>
    </alternativeName>
    <alternativeName>
        <fullName evidence="1">UDP-4-amino-4-deoxy-L-arabinose aminotransferase</fullName>
    </alternativeName>
</protein>
<name>ARNB_YERPS</name>
<organism>
    <name type="scientific">Yersinia pseudotuberculosis serotype I (strain IP32953)</name>
    <dbReference type="NCBI Taxonomy" id="273123"/>
    <lineage>
        <taxon>Bacteria</taxon>
        <taxon>Pseudomonadati</taxon>
        <taxon>Pseudomonadota</taxon>
        <taxon>Gammaproteobacteria</taxon>
        <taxon>Enterobacterales</taxon>
        <taxon>Yersiniaceae</taxon>
        <taxon>Yersinia</taxon>
    </lineage>
</organism>
<gene>
    <name evidence="1" type="primary">arnB</name>
    <name type="ordered locus">YPTB2330</name>
</gene>
<proteinExistence type="evidence at transcript level"/>
<accession>Q7BF87</accession>
<accession>Q66A02</accession>